<sequence length="89" mass="10577">MAISKEKKNEIMAQYARHEGDTGSVEVQVAVLTWEINHLNDHIKQHKKDHATYRGLMKKIGRRRNLLAYLRRTDVNRYRELIHSLGLRR</sequence>
<dbReference type="EMBL" id="CP000408">
    <property type="protein sequence ID" value="ABP93099.1"/>
    <property type="molecule type" value="Genomic_DNA"/>
</dbReference>
<dbReference type="SMR" id="A4W410"/>
<dbReference type="KEGG" id="ssv:SSU98_1941"/>
<dbReference type="HOGENOM" id="CLU_148518_0_1_9"/>
<dbReference type="GO" id="GO:0022627">
    <property type="term" value="C:cytosolic small ribosomal subunit"/>
    <property type="evidence" value="ECO:0007669"/>
    <property type="project" value="TreeGrafter"/>
</dbReference>
<dbReference type="GO" id="GO:0019843">
    <property type="term" value="F:rRNA binding"/>
    <property type="evidence" value="ECO:0007669"/>
    <property type="project" value="UniProtKB-UniRule"/>
</dbReference>
<dbReference type="GO" id="GO:0003735">
    <property type="term" value="F:structural constituent of ribosome"/>
    <property type="evidence" value="ECO:0007669"/>
    <property type="project" value="InterPro"/>
</dbReference>
<dbReference type="GO" id="GO:0006412">
    <property type="term" value="P:translation"/>
    <property type="evidence" value="ECO:0007669"/>
    <property type="project" value="UniProtKB-UniRule"/>
</dbReference>
<dbReference type="CDD" id="cd00353">
    <property type="entry name" value="Ribosomal_S15p_S13e"/>
    <property type="match status" value="1"/>
</dbReference>
<dbReference type="FunFam" id="1.10.287.10:FF:000002">
    <property type="entry name" value="30S ribosomal protein S15"/>
    <property type="match status" value="1"/>
</dbReference>
<dbReference type="Gene3D" id="6.10.250.3130">
    <property type="match status" value="1"/>
</dbReference>
<dbReference type="Gene3D" id="1.10.287.10">
    <property type="entry name" value="S15/NS1, RNA-binding"/>
    <property type="match status" value="1"/>
</dbReference>
<dbReference type="HAMAP" id="MF_01343_B">
    <property type="entry name" value="Ribosomal_uS15_B"/>
    <property type="match status" value="1"/>
</dbReference>
<dbReference type="InterPro" id="IPR000589">
    <property type="entry name" value="Ribosomal_uS15"/>
</dbReference>
<dbReference type="InterPro" id="IPR005290">
    <property type="entry name" value="Ribosomal_uS15_bac-type"/>
</dbReference>
<dbReference type="InterPro" id="IPR009068">
    <property type="entry name" value="uS15_NS1_RNA-bd_sf"/>
</dbReference>
<dbReference type="NCBIfam" id="TIGR00952">
    <property type="entry name" value="S15_bact"/>
    <property type="match status" value="1"/>
</dbReference>
<dbReference type="PANTHER" id="PTHR23321">
    <property type="entry name" value="RIBOSOMAL PROTEIN S15, BACTERIAL AND ORGANELLAR"/>
    <property type="match status" value="1"/>
</dbReference>
<dbReference type="PANTHER" id="PTHR23321:SF26">
    <property type="entry name" value="SMALL RIBOSOMAL SUBUNIT PROTEIN US15M"/>
    <property type="match status" value="1"/>
</dbReference>
<dbReference type="Pfam" id="PF00312">
    <property type="entry name" value="Ribosomal_S15"/>
    <property type="match status" value="1"/>
</dbReference>
<dbReference type="SMART" id="SM01387">
    <property type="entry name" value="Ribosomal_S15"/>
    <property type="match status" value="1"/>
</dbReference>
<dbReference type="SUPFAM" id="SSF47060">
    <property type="entry name" value="S15/NS1 RNA-binding domain"/>
    <property type="match status" value="1"/>
</dbReference>
<dbReference type="PROSITE" id="PS00362">
    <property type="entry name" value="RIBOSOMAL_S15"/>
    <property type="match status" value="1"/>
</dbReference>
<organism>
    <name type="scientific">Streptococcus suis (strain 98HAH33)</name>
    <dbReference type="NCBI Taxonomy" id="391296"/>
    <lineage>
        <taxon>Bacteria</taxon>
        <taxon>Bacillati</taxon>
        <taxon>Bacillota</taxon>
        <taxon>Bacilli</taxon>
        <taxon>Lactobacillales</taxon>
        <taxon>Streptococcaceae</taxon>
        <taxon>Streptococcus</taxon>
    </lineage>
</organism>
<accession>A4W410</accession>
<proteinExistence type="inferred from homology"/>
<feature type="chain" id="PRO_0000354217" description="Small ribosomal subunit protein uS15">
    <location>
        <begin position="1"/>
        <end position="89"/>
    </location>
</feature>
<comment type="function">
    <text evidence="1">One of the primary rRNA binding proteins, it binds directly to 16S rRNA where it helps nucleate assembly of the platform of the 30S subunit by binding and bridging several RNA helices of the 16S rRNA.</text>
</comment>
<comment type="function">
    <text evidence="1">Forms an intersubunit bridge (bridge B4) with the 23S rRNA of the 50S subunit in the ribosome.</text>
</comment>
<comment type="subunit">
    <text evidence="1">Part of the 30S ribosomal subunit. Forms a bridge to the 50S subunit in the 70S ribosome, contacting the 23S rRNA.</text>
</comment>
<comment type="similarity">
    <text evidence="1">Belongs to the universal ribosomal protein uS15 family.</text>
</comment>
<evidence type="ECO:0000255" key="1">
    <source>
        <dbReference type="HAMAP-Rule" id="MF_01343"/>
    </source>
</evidence>
<evidence type="ECO:0000305" key="2"/>
<keyword id="KW-0687">Ribonucleoprotein</keyword>
<keyword id="KW-0689">Ribosomal protein</keyword>
<keyword id="KW-0694">RNA-binding</keyword>
<keyword id="KW-0699">rRNA-binding</keyword>
<gene>
    <name evidence="1" type="primary">rpsO</name>
    <name type="ordered locus">SSU98_1941</name>
</gene>
<name>RS15_STRS2</name>
<reference key="1">
    <citation type="journal article" date="2007" name="PLoS ONE">
        <title>A glimpse of streptococcal toxic shock syndrome from comparative genomics of S. suis 2 Chinese isolates.</title>
        <authorList>
            <person name="Chen C."/>
            <person name="Tang J."/>
            <person name="Dong W."/>
            <person name="Wang C."/>
            <person name="Feng Y."/>
            <person name="Wang J."/>
            <person name="Zheng F."/>
            <person name="Pan X."/>
            <person name="Liu D."/>
            <person name="Li M."/>
            <person name="Song Y."/>
            <person name="Zhu X."/>
            <person name="Sun H."/>
            <person name="Feng T."/>
            <person name="Guo Z."/>
            <person name="Ju A."/>
            <person name="Ge J."/>
            <person name="Dong Y."/>
            <person name="Sun W."/>
            <person name="Jiang Y."/>
            <person name="Wang J."/>
            <person name="Yan J."/>
            <person name="Yang H."/>
            <person name="Wang X."/>
            <person name="Gao G.F."/>
            <person name="Yang R."/>
            <person name="Wang J."/>
            <person name="Yu J."/>
        </authorList>
    </citation>
    <scope>NUCLEOTIDE SEQUENCE [LARGE SCALE GENOMIC DNA]</scope>
    <source>
        <strain>98HAH33</strain>
    </source>
</reference>
<protein>
    <recommendedName>
        <fullName evidence="1">Small ribosomal subunit protein uS15</fullName>
    </recommendedName>
    <alternativeName>
        <fullName evidence="2">30S ribosomal protein S15</fullName>
    </alternativeName>
</protein>